<accession>Q164G2</accession>
<sequence>MSPATAPVLISCGEPAGIGPEIAVAAWDALQGTIPLAWVGDPRHLPASTTFTAITHPRAVADVPTGSLPVLVHDFAAPSTPGHPDPANAQGVIDVIAACVAWVQEGAAAALCTAPIHKKALIDGADFKHPGHTEYLQALAGGRSRAVMMLASDALRVVPTTIHIALEDVPRVLTPALLRETITITHAALQRQFGIQAPRIVVAGLNPHAGEGGAMGLEEQDWIADVISALAASGMNLRGPLPADTMFHARAREGYDAAIAMYHDQALIPIKTLDFDRGVNVTLGLPFIRTSPDHGTAFDIAGKGIANPTSMIEAIKLAAHMAARHV</sequence>
<reference key="1">
    <citation type="journal article" date="2007" name="J. Bacteriol.">
        <title>The complete genome sequence of Roseobacter denitrificans reveals a mixotrophic rather than photosynthetic metabolism.</title>
        <authorList>
            <person name="Swingley W.D."/>
            <person name="Sadekar S."/>
            <person name="Mastrian S.D."/>
            <person name="Matthies H.J."/>
            <person name="Hao J."/>
            <person name="Ramos H."/>
            <person name="Acharya C.R."/>
            <person name="Conrad A.L."/>
            <person name="Taylor H.L."/>
            <person name="Dejesa L.C."/>
            <person name="Shah M.K."/>
            <person name="O'Huallachain M.E."/>
            <person name="Lince M.T."/>
            <person name="Blankenship R.E."/>
            <person name="Beatty J.T."/>
            <person name="Touchman J.W."/>
        </authorList>
    </citation>
    <scope>NUCLEOTIDE SEQUENCE [LARGE SCALE GENOMIC DNA]</scope>
    <source>
        <strain>ATCC 33942 / OCh 114</strain>
    </source>
</reference>
<feature type="chain" id="PRO_1000051512" description="4-hydroxythreonine-4-phosphate dehydrogenase">
    <location>
        <begin position="1"/>
        <end position="326"/>
    </location>
</feature>
<feature type="binding site" evidence="1">
    <location>
        <position position="132"/>
    </location>
    <ligand>
        <name>substrate</name>
    </ligand>
</feature>
<feature type="binding site" evidence="1">
    <location>
        <position position="133"/>
    </location>
    <ligand>
        <name>substrate</name>
    </ligand>
</feature>
<feature type="binding site" evidence="1">
    <location>
        <position position="163"/>
    </location>
    <ligand>
        <name>a divalent metal cation</name>
        <dbReference type="ChEBI" id="CHEBI:60240"/>
        <note>ligand shared between dimeric partners</note>
    </ligand>
</feature>
<feature type="binding site" evidence="1">
    <location>
        <position position="208"/>
    </location>
    <ligand>
        <name>a divalent metal cation</name>
        <dbReference type="ChEBI" id="CHEBI:60240"/>
        <note>ligand shared between dimeric partners</note>
    </ligand>
</feature>
<feature type="binding site" evidence="1">
    <location>
        <position position="263"/>
    </location>
    <ligand>
        <name>a divalent metal cation</name>
        <dbReference type="ChEBI" id="CHEBI:60240"/>
        <note>ligand shared between dimeric partners</note>
    </ligand>
</feature>
<feature type="binding site" evidence="1">
    <location>
        <position position="271"/>
    </location>
    <ligand>
        <name>substrate</name>
    </ligand>
</feature>
<feature type="binding site" evidence="1">
    <location>
        <position position="280"/>
    </location>
    <ligand>
        <name>substrate</name>
    </ligand>
</feature>
<feature type="binding site" evidence="1">
    <location>
        <position position="289"/>
    </location>
    <ligand>
        <name>substrate</name>
    </ligand>
</feature>
<comment type="function">
    <text evidence="1">Catalyzes the NAD(P)-dependent oxidation of 4-(phosphooxy)-L-threonine (HTP) into 2-amino-3-oxo-4-(phosphooxy)butyric acid which spontaneously decarboxylates to form 3-amino-2-oxopropyl phosphate (AHAP).</text>
</comment>
<comment type="catalytic activity">
    <reaction evidence="1">
        <text>4-(phosphooxy)-L-threonine + NAD(+) = 3-amino-2-oxopropyl phosphate + CO2 + NADH</text>
        <dbReference type="Rhea" id="RHEA:32275"/>
        <dbReference type="ChEBI" id="CHEBI:16526"/>
        <dbReference type="ChEBI" id="CHEBI:57279"/>
        <dbReference type="ChEBI" id="CHEBI:57540"/>
        <dbReference type="ChEBI" id="CHEBI:57945"/>
        <dbReference type="ChEBI" id="CHEBI:58452"/>
        <dbReference type="EC" id="1.1.1.262"/>
    </reaction>
</comment>
<comment type="cofactor">
    <cofactor evidence="1">
        <name>Zn(2+)</name>
        <dbReference type="ChEBI" id="CHEBI:29105"/>
    </cofactor>
    <cofactor evidence="1">
        <name>Mg(2+)</name>
        <dbReference type="ChEBI" id="CHEBI:18420"/>
    </cofactor>
    <cofactor evidence="1">
        <name>Co(2+)</name>
        <dbReference type="ChEBI" id="CHEBI:48828"/>
    </cofactor>
    <text evidence="1">Binds 1 divalent metal cation per subunit. Can use ions such as Zn(2+), Mg(2+) or Co(2+).</text>
</comment>
<comment type="pathway">
    <text evidence="1">Cofactor biosynthesis; pyridoxine 5'-phosphate biosynthesis; pyridoxine 5'-phosphate from D-erythrose 4-phosphate: step 4/5.</text>
</comment>
<comment type="subunit">
    <text evidence="1">Homodimer.</text>
</comment>
<comment type="subcellular location">
    <subcellularLocation>
        <location evidence="1">Cytoplasm</location>
    </subcellularLocation>
</comment>
<comment type="miscellaneous">
    <text evidence="1">The active site is located at the dimer interface.</text>
</comment>
<comment type="similarity">
    <text evidence="1">Belongs to the PdxA family.</text>
</comment>
<keyword id="KW-0170">Cobalt</keyword>
<keyword id="KW-0963">Cytoplasm</keyword>
<keyword id="KW-0460">Magnesium</keyword>
<keyword id="KW-0479">Metal-binding</keyword>
<keyword id="KW-0520">NAD</keyword>
<keyword id="KW-0521">NADP</keyword>
<keyword id="KW-0560">Oxidoreductase</keyword>
<keyword id="KW-0664">Pyridoxine biosynthesis</keyword>
<keyword id="KW-1185">Reference proteome</keyword>
<keyword id="KW-0862">Zinc</keyword>
<evidence type="ECO:0000255" key="1">
    <source>
        <dbReference type="HAMAP-Rule" id="MF_00536"/>
    </source>
</evidence>
<proteinExistence type="inferred from homology"/>
<dbReference type="EC" id="1.1.1.262" evidence="1"/>
<dbReference type="EMBL" id="CP000362">
    <property type="protein sequence ID" value="ABG32631.1"/>
    <property type="molecule type" value="Genomic_DNA"/>
</dbReference>
<dbReference type="RefSeq" id="WP_011569247.1">
    <property type="nucleotide sequence ID" value="NC_008209.1"/>
</dbReference>
<dbReference type="SMR" id="Q164G2"/>
<dbReference type="STRING" id="375451.RD1_3123"/>
<dbReference type="KEGG" id="rde:RD1_3123"/>
<dbReference type="eggNOG" id="COG1995">
    <property type="taxonomic scope" value="Bacteria"/>
</dbReference>
<dbReference type="HOGENOM" id="CLU_040168_2_0_5"/>
<dbReference type="OrthoDB" id="9801783at2"/>
<dbReference type="UniPathway" id="UPA00244">
    <property type="reaction ID" value="UER00312"/>
</dbReference>
<dbReference type="Proteomes" id="UP000007029">
    <property type="component" value="Chromosome"/>
</dbReference>
<dbReference type="GO" id="GO:0005737">
    <property type="term" value="C:cytoplasm"/>
    <property type="evidence" value="ECO:0007669"/>
    <property type="project" value="UniProtKB-SubCell"/>
</dbReference>
<dbReference type="GO" id="GO:0050570">
    <property type="term" value="F:4-hydroxythreonine-4-phosphate dehydrogenase activity"/>
    <property type="evidence" value="ECO:0007669"/>
    <property type="project" value="UniProtKB-UniRule"/>
</dbReference>
<dbReference type="GO" id="GO:0050897">
    <property type="term" value="F:cobalt ion binding"/>
    <property type="evidence" value="ECO:0007669"/>
    <property type="project" value="UniProtKB-UniRule"/>
</dbReference>
<dbReference type="GO" id="GO:0000287">
    <property type="term" value="F:magnesium ion binding"/>
    <property type="evidence" value="ECO:0007669"/>
    <property type="project" value="UniProtKB-UniRule"/>
</dbReference>
<dbReference type="GO" id="GO:0051287">
    <property type="term" value="F:NAD binding"/>
    <property type="evidence" value="ECO:0007669"/>
    <property type="project" value="InterPro"/>
</dbReference>
<dbReference type="GO" id="GO:0008270">
    <property type="term" value="F:zinc ion binding"/>
    <property type="evidence" value="ECO:0007669"/>
    <property type="project" value="UniProtKB-UniRule"/>
</dbReference>
<dbReference type="GO" id="GO:0042823">
    <property type="term" value="P:pyridoxal phosphate biosynthetic process"/>
    <property type="evidence" value="ECO:0007669"/>
    <property type="project" value="UniProtKB-UniRule"/>
</dbReference>
<dbReference type="GO" id="GO:0008615">
    <property type="term" value="P:pyridoxine biosynthetic process"/>
    <property type="evidence" value="ECO:0007669"/>
    <property type="project" value="UniProtKB-UniRule"/>
</dbReference>
<dbReference type="Gene3D" id="3.40.718.10">
    <property type="entry name" value="Isopropylmalate Dehydrogenase"/>
    <property type="match status" value="1"/>
</dbReference>
<dbReference type="HAMAP" id="MF_00536">
    <property type="entry name" value="PdxA"/>
    <property type="match status" value="1"/>
</dbReference>
<dbReference type="InterPro" id="IPR037510">
    <property type="entry name" value="PdxA"/>
</dbReference>
<dbReference type="InterPro" id="IPR005255">
    <property type="entry name" value="PdxA_fam"/>
</dbReference>
<dbReference type="NCBIfam" id="TIGR00557">
    <property type="entry name" value="pdxA"/>
    <property type="match status" value="1"/>
</dbReference>
<dbReference type="NCBIfam" id="NF003699">
    <property type="entry name" value="PRK05312.1"/>
    <property type="match status" value="1"/>
</dbReference>
<dbReference type="PANTHER" id="PTHR30004">
    <property type="entry name" value="4-HYDROXYTHREONINE-4-PHOSPHATE DEHYDROGENASE"/>
    <property type="match status" value="1"/>
</dbReference>
<dbReference type="PANTHER" id="PTHR30004:SF6">
    <property type="entry name" value="D-THREONATE 4-PHOSPHATE DEHYDROGENASE"/>
    <property type="match status" value="1"/>
</dbReference>
<dbReference type="Pfam" id="PF04166">
    <property type="entry name" value="PdxA"/>
    <property type="match status" value="1"/>
</dbReference>
<dbReference type="SUPFAM" id="SSF53659">
    <property type="entry name" value="Isocitrate/Isopropylmalate dehydrogenase-like"/>
    <property type="match status" value="1"/>
</dbReference>
<protein>
    <recommendedName>
        <fullName evidence="1">4-hydroxythreonine-4-phosphate dehydrogenase</fullName>
        <ecNumber evidence="1">1.1.1.262</ecNumber>
    </recommendedName>
    <alternativeName>
        <fullName evidence="1">4-(phosphohydroxy)-L-threonine dehydrogenase</fullName>
    </alternativeName>
</protein>
<organism>
    <name type="scientific">Roseobacter denitrificans (strain ATCC 33942 / OCh 114)</name>
    <name type="common">Erythrobacter sp. (strain OCh 114)</name>
    <name type="synonym">Roseobacter denitrificans</name>
    <dbReference type="NCBI Taxonomy" id="375451"/>
    <lineage>
        <taxon>Bacteria</taxon>
        <taxon>Pseudomonadati</taxon>
        <taxon>Pseudomonadota</taxon>
        <taxon>Alphaproteobacteria</taxon>
        <taxon>Rhodobacterales</taxon>
        <taxon>Roseobacteraceae</taxon>
        <taxon>Roseobacter</taxon>
    </lineage>
</organism>
<gene>
    <name evidence="1" type="primary">pdxA</name>
    <name type="ordered locus">RD1_3123</name>
</gene>
<name>PDXA_ROSDO</name>